<keyword id="KW-0067">ATP-binding</keyword>
<keyword id="KW-0131">Cell cycle</keyword>
<keyword id="KW-0132">Cell division</keyword>
<keyword id="KW-0133">Cell shape</keyword>
<keyword id="KW-0961">Cell wall biogenesis/degradation</keyword>
<keyword id="KW-0963">Cytoplasm</keyword>
<keyword id="KW-0436">Ligase</keyword>
<keyword id="KW-0547">Nucleotide-binding</keyword>
<keyword id="KW-0573">Peptidoglycan synthesis</keyword>
<protein>
    <recommendedName>
        <fullName evidence="1">UDP-N-acetylmuramate--L-alanine ligase</fullName>
        <ecNumber evidence="1">6.3.2.8</ecNumber>
    </recommendedName>
    <alternativeName>
        <fullName evidence="1">UDP-N-acetylmuramoyl-L-alanine synthetase</fullName>
    </alternativeName>
</protein>
<proteinExistence type="inferred from homology"/>
<comment type="function">
    <text evidence="1">Cell wall formation.</text>
</comment>
<comment type="catalytic activity">
    <reaction evidence="1">
        <text>UDP-N-acetyl-alpha-D-muramate + L-alanine + ATP = UDP-N-acetyl-alpha-D-muramoyl-L-alanine + ADP + phosphate + H(+)</text>
        <dbReference type="Rhea" id="RHEA:23372"/>
        <dbReference type="ChEBI" id="CHEBI:15378"/>
        <dbReference type="ChEBI" id="CHEBI:30616"/>
        <dbReference type="ChEBI" id="CHEBI:43474"/>
        <dbReference type="ChEBI" id="CHEBI:57972"/>
        <dbReference type="ChEBI" id="CHEBI:70757"/>
        <dbReference type="ChEBI" id="CHEBI:83898"/>
        <dbReference type="ChEBI" id="CHEBI:456216"/>
        <dbReference type="EC" id="6.3.2.8"/>
    </reaction>
</comment>
<comment type="pathway">
    <text evidence="1">Cell wall biogenesis; peptidoglycan biosynthesis.</text>
</comment>
<comment type="subcellular location">
    <subcellularLocation>
        <location evidence="1">Cytoplasm</location>
    </subcellularLocation>
</comment>
<comment type="similarity">
    <text evidence="1">Belongs to the MurCDEF family.</text>
</comment>
<dbReference type="EC" id="6.3.2.8" evidence="1"/>
<dbReference type="EMBL" id="CP000766">
    <property type="protein sequence ID" value="ABY72296.1"/>
    <property type="molecule type" value="Genomic_DNA"/>
</dbReference>
<dbReference type="RefSeq" id="WP_012150546.1">
    <property type="nucleotide sequence ID" value="NC_010263.3"/>
</dbReference>
<dbReference type="SMR" id="B0BWS0"/>
<dbReference type="GeneID" id="79937108"/>
<dbReference type="KEGG" id="rrj:RrIowa_0401"/>
<dbReference type="eggNOG" id="COG0773">
    <property type="taxonomic scope" value="Bacteria"/>
</dbReference>
<dbReference type="HOGENOM" id="CLU_028104_2_2_5"/>
<dbReference type="UniPathway" id="UPA00219"/>
<dbReference type="Proteomes" id="UP000000796">
    <property type="component" value="Chromosome"/>
</dbReference>
<dbReference type="GO" id="GO:0005737">
    <property type="term" value="C:cytoplasm"/>
    <property type="evidence" value="ECO:0007669"/>
    <property type="project" value="UniProtKB-SubCell"/>
</dbReference>
<dbReference type="GO" id="GO:0005524">
    <property type="term" value="F:ATP binding"/>
    <property type="evidence" value="ECO:0007669"/>
    <property type="project" value="UniProtKB-UniRule"/>
</dbReference>
<dbReference type="GO" id="GO:0008763">
    <property type="term" value="F:UDP-N-acetylmuramate-L-alanine ligase activity"/>
    <property type="evidence" value="ECO:0007669"/>
    <property type="project" value="UniProtKB-UniRule"/>
</dbReference>
<dbReference type="GO" id="GO:0051301">
    <property type="term" value="P:cell division"/>
    <property type="evidence" value="ECO:0007669"/>
    <property type="project" value="UniProtKB-KW"/>
</dbReference>
<dbReference type="GO" id="GO:0071555">
    <property type="term" value="P:cell wall organization"/>
    <property type="evidence" value="ECO:0007669"/>
    <property type="project" value="UniProtKB-KW"/>
</dbReference>
<dbReference type="GO" id="GO:0009252">
    <property type="term" value="P:peptidoglycan biosynthetic process"/>
    <property type="evidence" value="ECO:0007669"/>
    <property type="project" value="UniProtKB-UniRule"/>
</dbReference>
<dbReference type="GO" id="GO:0008360">
    <property type="term" value="P:regulation of cell shape"/>
    <property type="evidence" value="ECO:0007669"/>
    <property type="project" value="UniProtKB-KW"/>
</dbReference>
<dbReference type="Gene3D" id="3.90.190.20">
    <property type="entry name" value="Mur ligase, C-terminal domain"/>
    <property type="match status" value="1"/>
</dbReference>
<dbReference type="Gene3D" id="3.40.1190.10">
    <property type="entry name" value="Mur-like, catalytic domain"/>
    <property type="match status" value="1"/>
</dbReference>
<dbReference type="Gene3D" id="3.40.50.720">
    <property type="entry name" value="NAD(P)-binding Rossmann-like Domain"/>
    <property type="match status" value="1"/>
</dbReference>
<dbReference type="HAMAP" id="MF_00046">
    <property type="entry name" value="MurC"/>
    <property type="match status" value="1"/>
</dbReference>
<dbReference type="InterPro" id="IPR036565">
    <property type="entry name" value="Mur-like_cat_sf"/>
</dbReference>
<dbReference type="InterPro" id="IPR004101">
    <property type="entry name" value="Mur_ligase_C"/>
</dbReference>
<dbReference type="InterPro" id="IPR036615">
    <property type="entry name" value="Mur_ligase_C_dom_sf"/>
</dbReference>
<dbReference type="InterPro" id="IPR013221">
    <property type="entry name" value="Mur_ligase_cen"/>
</dbReference>
<dbReference type="InterPro" id="IPR000713">
    <property type="entry name" value="Mur_ligase_N"/>
</dbReference>
<dbReference type="InterPro" id="IPR050061">
    <property type="entry name" value="MurCDEF_pg_biosynth"/>
</dbReference>
<dbReference type="InterPro" id="IPR005758">
    <property type="entry name" value="UDP-N-AcMur_Ala_ligase_MurC"/>
</dbReference>
<dbReference type="NCBIfam" id="TIGR01082">
    <property type="entry name" value="murC"/>
    <property type="match status" value="1"/>
</dbReference>
<dbReference type="PANTHER" id="PTHR43445:SF3">
    <property type="entry name" value="UDP-N-ACETYLMURAMATE--L-ALANINE LIGASE"/>
    <property type="match status" value="1"/>
</dbReference>
<dbReference type="PANTHER" id="PTHR43445">
    <property type="entry name" value="UDP-N-ACETYLMURAMATE--L-ALANINE LIGASE-RELATED"/>
    <property type="match status" value="1"/>
</dbReference>
<dbReference type="Pfam" id="PF01225">
    <property type="entry name" value="Mur_ligase"/>
    <property type="match status" value="1"/>
</dbReference>
<dbReference type="Pfam" id="PF02875">
    <property type="entry name" value="Mur_ligase_C"/>
    <property type="match status" value="1"/>
</dbReference>
<dbReference type="Pfam" id="PF08245">
    <property type="entry name" value="Mur_ligase_M"/>
    <property type="match status" value="1"/>
</dbReference>
<dbReference type="SUPFAM" id="SSF51984">
    <property type="entry name" value="MurCD N-terminal domain"/>
    <property type="match status" value="1"/>
</dbReference>
<dbReference type="SUPFAM" id="SSF53623">
    <property type="entry name" value="MurD-like peptide ligases, catalytic domain"/>
    <property type="match status" value="1"/>
</dbReference>
<dbReference type="SUPFAM" id="SSF53244">
    <property type="entry name" value="MurD-like peptide ligases, peptide-binding domain"/>
    <property type="match status" value="1"/>
</dbReference>
<sequence>MLLLELKKTNQTLETIHFIGIGGVGMSGIAEILYNLGYKVQGSDLVENYNTKRLESYGIKIFLGHAEQNITNVSYVVISSAINPKNPEIKEALERKIPIIRRADMLAELMRLKCSVAVSGSHGKTTTTSLVACLFEAAGLCPTVINGGIINNKSTNAYLGSSNYLIAEADESDATFIHIPSTIAIITNIDPEHLDYYRDFETLIGAFRSFITNLPFYGFAVCCIDHKIVRKLVDEITERKIVTYGIDSEDAHIIAFNINTDIASSTFDVKISLPNVLGTTIIEKITIPTPGRHNILNSLAAIAVGIELDFGIKAIKNGFNNFKGVKRRFTKVAEYNNASIIDDYAHHPEEIKATLATAKNIANKQNGKVIAIFQPHRYSRMQYLFDDFMLCFADADILYITDIYAAGENPIEGITGRSLVDKITKRKHHDKANFLAELDDAVGVIIDNAASGDMIIMMGAGNISSFANELDGRLSSRGFSCHTVV</sequence>
<gene>
    <name evidence="1" type="primary">murC</name>
    <name type="ordered locus">RrIowa_0401</name>
</gene>
<accession>B0BWS0</accession>
<feature type="chain" id="PRO_1000074750" description="UDP-N-acetylmuramate--L-alanine ligase">
    <location>
        <begin position="1"/>
        <end position="485"/>
    </location>
</feature>
<feature type="binding site" evidence="1">
    <location>
        <begin position="120"/>
        <end position="126"/>
    </location>
    <ligand>
        <name>ATP</name>
        <dbReference type="ChEBI" id="CHEBI:30616"/>
    </ligand>
</feature>
<name>MURC_RICRO</name>
<reference key="1">
    <citation type="journal article" date="2008" name="Infect. Immun.">
        <title>Genomic comparison of virulent Rickettsia rickettsii Sheila Smith and avirulent Rickettsia rickettsii Iowa.</title>
        <authorList>
            <person name="Ellison D.W."/>
            <person name="Clark T.R."/>
            <person name="Sturdevant D.E."/>
            <person name="Virtaneva K."/>
            <person name="Porcella S.F."/>
            <person name="Hackstadt T."/>
        </authorList>
    </citation>
    <scope>NUCLEOTIDE SEQUENCE [LARGE SCALE GENOMIC DNA]</scope>
    <source>
        <strain>Iowa</strain>
    </source>
</reference>
<evidence type="ECO:0000255" key="1">
    <source>
        <dbReference type="HAMAP-Rule" id="MF_00046"/>
    </source>
</evidence>
<organism>
    <name type="scientific">Rickettsia rickettsii (strain Iowa)</name>
    <dbReference type="NCBI Taxonomy" id="452659"/>
    <lineage>
        <taxon>Bacteria</taxon>
        <taxon>Pseudomonadati</taxon>
        <taxon>Pseudomonadota</taxon>
        <taxon>Alphaproteobacteria</taxon>
        <taxon>Rickettsiales</taxon>
        <taxon>Rickettsiaceae</taxon>
        <taxon>Rickettsieae</taxon>
        <taxon>Rickettsia</taxon>
        <taxon>spotted fever group</taxon>
    </lineage>
</organism>